<comment type="function">
    <text evidence="1">Catalyzes the attachment of tryptophan to tRNA(Trp).</text>
</comment>
<comment type="catalytic activity">
    <reaction evidence="1">
        <text>tRNA(Trp) + L-tryptophan + ATP = L-tryptophyl-tRNA(Trp) + AMP + diphosphate + H(+)</text>
        <dbReference type="Rhea" id="RHEA:24080"/>
        <dbReference type="Rhea" id="RHEA-COMP:9671"/>
        <dbReference type="Rhea" id="RHEA-COMP:9705"/>
        <dbReference type="ChEBI" id="CHEBI:15378"/>
        <dbReference type="ChEBI" id="CHEBI:30616"/>
        <dbReference type="ChEBI" id="CHEBI:33019"/>
        <dbReference type="ChEBI" id="CHEBI:57912"/>
        <dbReference type="ChEBI" id="CHEBI:78442"/>
        <dbReference type="ChEBI" id="CHEBI:78535"/>
        <dbReference type="ChEBI" id="CHEBI:456215"/>
        <dbReference type="EC" id="6.1.1.2"/>
    </reaction>
</comment>
<comment type="subunit">
    <text evidence="1">Homodimer.</text>
</comment>
<comment type="subcellular location">
    <subcellularLocation>
        <location evidence="1">Cytoplasm</location>
    </subcellularLocation>
</comment>
<comment type="similarity">
    <text evidence="1">Belongs to the class-I aminoacyl-tRNA synthetase family.</text>
</comment>
<feature type="chain" id="PRO_0000136679" description="Tryptophan--tRNA ligase">
    <location>
        <begin position="1"/>
        <end position="329"/>
    </location>
</feature>
<feature type="short sequence motif" description="'HIGH' region" evidence="1">
    <location>
        <begin position="10"/>
        <end position="18"/>
    </location>
</feature>
<feature type="short sequence motif" description="'KMSKS' region" evidence="1">
    <location>
        <begin position="193"/>
        <end position="197"/>
    </location>
</feature>
<feature type="binding site" evidence="1">
    <location>
        <begin position="9"/>
        <end position="11"/>
    </location>
    <ligand>
        <name>ATP</name>
        <dbReference type="ChEBI" id="CHEBI:30616"/>
    </ligand>
</feature>
<feature type="binding site" evidence="1">
    <location>
        <begin position="17"/>
        <end position="18"/>
    </location>
    <ligand>
        <name>ATP</name>
        <dbReference type="ChEBI" id="CHEBI:30616"/>
    </ligand>
</feature>
<feature type="binding site" evidence="1">
    <location>
        <position position="133"/>
    </location>
    <ligand>
        <name>L-tryptophan</name>
        <dbReference type="ChEBI" id="CHEBI:57912"/>
    </ligand>
</feature>
<feature type="binding site" evidence="1">
    <location>
        <begin position="145"/>
        <end position="147"/>
    </location>
    <ligand>
        <name>ATP</name>
        <dbReference type="ChEBI" id="CHEBI:30616"/>
    </ligand>
</feature>
<feature type="binding site" evidence="1">
    <location>
        <position position="184"/>
    </location>
    <ligand>
        <name>ATP</name>
        <dbReference type="ChEBI" id="CHEBI:30616"/>
    </ligand>
</feature>
<feature type="binding site" evidence="1">
    <location>
        <begin position="193"/>
        <end position="197"/>
    </location>
    <ligand>
        <name>ATP</name>
        <dbReference type="ChEBI" id="CHEBI:30616"/>
    </ligand>
</feature>
<sequence>METLFSGIQPSGIPTIGNYIGALKQFVDVQNDYDCYFCIVDQHAITMPQDRLKLRKQTRQLAAIYLASGIDPDKATLFIQSEVPAHVQAGWMLTTIASVGELERMTQYKDKAQKAVEGIPAGLLTYPPLMAADIVLYNTNIVPVGDDQKQHIELTRNLVDRFNSRYNDVLVKPEIRMPKVGGRVMSLQDPTRKMSKSDDNAKNFISLLDEPNVAAKKIKSAVTDSDGIIKFDRDNKPGITNLISIYAGLTDMPIKDIEAKYEGEGYGKFKGDLAEIVKAFLVEFQEKYESFYNSDKLDDILDQGRDKAHKVSFKTVKKMEKAMGLGRKR</sequence>
<proteinExistence type="inferred from homology"/>
<dbReference type="EC" id="6.1.1.2" evidence="1"/>
<dbReference type="EMBL" id="BX571857">
    <property type="protein sequence ID" value="CAG42641.1"/>
    <property type="molecule type" value="Genomic_DNA"/>
</dbReference>
<dbReference type="RefSeq" id="WP_000448934.1">
    <property type="nucleotide sequence ID" value="NC_002953.3"/>
</dbReference>
<dbReference type="SMR" id="Q6GAT0"/>
<dbReference type="KEGG" id="sas:SAS0866"/>
<dbReference type="HOGENOM" id="CLU_029244_1_1_9"/>
<dbReference type="GO" id="GO:0005829">
    <property type="term" value="C:cytosol"/>
    <property type="evidence" value="ECO:0007669"/>
    <property type="project" value="TreeGrafter"/>
</dbReference>
<dbReference type="GO" id="GO:0005524">
    <property type="term" value="F:ATP binding"/>
    <property type="evidence" value="ECO:0007669"/>
    <property type="project" value="UniProtKB-UniRule"/>
</dbReference>
<dbReference type="GO" id="GO:0004830">
    <property type="term" value="F:tryptophan-tRNA ligase activity"/>
    <property type="evidence" value="ECO:0007669"/>
    <property type="project" value="UniProtKB-UniRule"/>
</dbReference>
<dbReference type="GO" id="GO:0006436">
    <property type="term" value="P:tryptophanyl-tRNA aminoacylation"/>
    <property type="evidence" value="ECO:0007669"/>
    <property type="project" value="UniProtKB-UniRule"/>
</dbReference>
<dbReference type="CDD" id="cd00806">
    <property type="entry name" value="TrpRS_core"/>
    <property type="match status" value="1"/>
</dbReference>
<dbReference type="FunFam" id="1.10.240.10:FF:000002">
    <property type="entry name" value="Tryptophan--tRNA ligase"/>
    <property type="match status" value="1"/>
</dbReference>
<dbReference type="Gene3D" id="3.40.50.620">
    <property type="entry name" value="HUPs"/>
    <property type="match status" value="1"/>
</dbReference>
<dbReference type="Gene3D" id="1.10.240.10">
    <property type="entry name" value="Tyrosyl-Transfer RNA Synthetase"/>
    <property type="match status" value="1"/>
</dbReference>
<dbReference type="HAMAP" id="MF_00140_B">
    <property type="entry name" value="Trp_tRNA_synth_B"/>
    <property type="match status" value="1"/>
</dbReference>
<dbReference type="InterPro" id="IPR001412">
    <property type="entry name" value="aa-tRNA-synth_I_CS"/>
</dbReference>
<dbReference type="InterPro" id="IPR002305">
    <property type="entry name" value="aa-tRNA-synth_Ic"/>
</dbReference>
<dbReference type="InterPro" id="IPR014729">
    <property type="entry name" value="Rossmann-like_a/b/a_fold"/>
</dbReference>
<dbReference type="InterPro" id="IPR002306">
    <property type="entry name" value="Trp-tRNA-ligase"/>
</dbReference>
<dbReference type="InterPro" id="IPR024109">
    <property type="entry name" value="Trp-tRNA-ligase_bac-type"/>
</dbReference>
<dbReference type="InterPro" id="IPR050203">
    <property type="entry name" value="Trp-tRNA_synthetase"/>
</dbReference>
<dbReference type="NCBIfam" id="TIGR00233">
    <property type="entry name" value="trpS"/>
    <property type="match status" value="1"/>
</dbReference>
<dbReference type="PANTHER" id="PTHR43766">
    <property type="entry name" value="TRYPTOPHAN--TRNA LIGASE, MITOCHONDRIAL"/>
    <property type="match status" value="1"/>
</dbReference>
<dbReference type="PANTHER" id="PTHR43766:SF1">
    <property type="entry name" value="TRYPTOPHAN--TRNA LIGASE, MITOCHONDRIAL"/>
    <property type="match status" value="1"/>
</dbReference>
<dbReference type="Pfam" id="PF00579">
    <property type="entry name" value="tRNA-synt_1b"/>
    <property type="match status" value="1"/>
</dbReference>
<dbReference type="PRINTS" id="PR01039">
    <property type="entry name" value="TRNASYNTHTRP"/>
</dbReference>
<dbReference type="SUPFAM" id="SSF52374">
    <property type="entry name" value="Nucleotidylyl transferase"/>
    <property type="match status" value="1"/>
</dbReference>
<dbReference type="PROSITE" id="PS00178">
    <property type="entry name" value="AA_TRNA_LIGASE_I"/>
    <property type="match status" value="1"/>
</dbReference>
<organism>
    <name type="scientific">Staphylococcus aureus (strain MSSA476)</name>
    <dbReference type="NCBI Taxonomy" id="282459"/>
    <lineage>
        <taxon>Bacteria</taxon>
        <taxon>Bacillati</taxon>
        <taxon>Bacillota</taxon>
        <taxon>Bacilli</taxon>
        <taxon>Bacillales</taxon>
        <taxon>Staphylococcaceae</taxon>
        <taxon>Staphylococcus</taxon>
    </lineage>
</organism>
<evidence type="ECO:0000255" key="1">
    <source>
        <dbReference type="HAMAP-Rule" id="MF_00140"/>
    </source>
</evidence>
<keyword id="KW-0030">Aminoacyl-tRNA synthetase</keyword>
<keyword id="KW-0067">ATP-binding</keyword>
<keyword id="KW-0963">Cytoplasm</keyword>
<keyword id="KW-0436">Ligase</keyword>
<keyword id="KW-0547">Nucleotide-binding</keyword>
<keyword id="KW-0648">Protein biosynthesis</keyword>
<protein>
    <recommendedName>
        <fullName evidence="1">Tryptophan--tRNA ligase</fullName>
        <ecNumber evidence="1">6.1.1.2</ecNumber>
    </recommendedName>
    <alternativeName>
        <fullName evidence="1">Tryptophanyl-tRNA synthetase</fullName>
        <shortName evidence="1">TrpRS</shortName>
    </alternativeName>
</protein>
<gene>
    <name evidence="1" type="primary">trpS</name>
    <name type="ordered locus">SAS0866</name>
</gene>
<reference key="1">
    <citation type="journal article" date="2004" name="Proc. Natl. Acad. Sci. U.S.A.">
        <title>Complete genomes of two clinical Staphylococcus aureus strains: evidence for the rapid evolution of virulence and drug resistance.</title>
        <authorList>
            <person name="Holden M.T.G."/>
            <person name="Feil E.J."/>
            <person name="Lindsay J.A."/>
            <person name="Peacock S.J."/>
            <person name="Day N.P.J."/>
            <person name="Enright M.C."/>
            <person name="Foster T.J."/>
            <person name="Moore C.E."/>
            <person name="Hurst L."/>
            <person name="Atkin R."/>
            <person name="Barron A."/>
            <person name="Bason N."/>
            <person name="Bentley S.D."/>
            <person name="Chillingworth C."/>
            <person name="Chillingworth T."/>
            <person name="Churcher C."/>
            <person name="Clark L."/>
            <person name="Corton C."/>
            <person name="Cronin A."/>
            <person name="Doggett J."/>
            <person name="Dowd L."/>
            <person name="Feltwell T."/>
            <person name="Hance Z."/>
            <person name="Harris B."/>
            <person name="Hauser H."/>
            <person name="Holroyd S."/>
            <person name="Jagels K."/>
            <person name="James K.D."/>
            <person name="Lennard N."/>
            <person name="Line A."/>
            <person name="Mayes R."/>
            <person name="Moule S."/>
            <person name="Mungall K."/>
            <person name="Ormond D."/>
            <person name="Quail M.A."/>
            <person name="Rabbinowitsch E."/>
            <person name="Rutherford K.M."/>
            <person name="Sanders M."/>
            <person name="Sharp S."/>
            <person name="Simmonds M."/>
            <person name="Stevens K."/>
            <person name="Whitehead S."/>
            <person name="Barrell B.G."/>
            <person name="Spratt B.G."/>
            <person name="Parkhill J."/>
        </authorList>
    </citation>
    <scope>NUCLEOTIDE SEQUENCE [LARGE SCALE GENOMIC DNA]</scope>
    <source>
        <strain>MSSA476</strain>
    </source>
</reference>
<name>SYW_STAAS</name>
<accession>Q6GAT0</accession>